<organism>
    <name type="scientific">Rattus norvegicus</name>
    <name type="common">Rat</name>
    <dbReference type="NCBI Taxonomy" id="10116"/>
    <lineage>
        <taxon>Eukaryota</taxon>
        <taxon>Metazoa</taxon>
        <taxon>Chordata</taxon>
        <taxon>Craniata</taxon>
        <taxon>Vertebrata</taxon>
        <taxon>Euteleostomi</taxon>
        <taxon>Mammalia</taxon>
        <taxon>Eutheria</taxon>
        <taxon>Euarchontoglires</taxon>
        <taxon>Glires</taxon>
        <taxon>Rodentia</taxon>
        <taxon>Myomorpha</taxon>
        <taxon>Muroidea</taxon>
        <taxon>Muridae</taxon>
        <taxon>Murinae</taxon>
        <taxon>Rattus</taxon>
    </lineage>
</organism>
<name>PSC1_RAT</name>
<dbReference type="EMBL" id="V01255">
    <property type="protein sequence ID" value="CAA24568.1"/>
    <property type="molecule type" value="mRNA"/>
</dbReference>
<dbReference type="EMBL" id="J00774">
    <property type="protein sequence ID" value="AAA41969.1"/>
    <property type="molecule type" value="mRNA"/>
</dbReference>
<dbReference type="EMBL" id="J00773">
    <property type="protein sequence ID" value="AAA41969.1"/>
    <property type="status" value="JOINED"/>
    <property type="molecule type" value="mRNA"/>
</dbReference>
<dbReference type="EMBL" id="V01545">
    <property type="protein sequence ID" value="CAA24787.1"/>
    <property type="molecule type" value="mRNA"/>
</dbReference>
<dbReference type="EMBL" id="AF277385">
    <property type="protein sequence ID" value="AAG17693.1"/>
    <property type="molecule type" value="mRNA"/>
</dbReference>
<dbReference type="EMBL" id="BC099696">
    <property type="protein sequence ID" value="AAH99696.1"/>
    <property type="molecule type" value="mRNA"/>
</dbReference>
<dbReference type="PIR" id="A93286">
    <property type="entry name" value="BORT1"/>
</dbReference>
<dbReference type="RefSeq" id="NP_803435.1">
    <property type="nucleotide sequence ID" value="NM_177482.1"/>
</dbReference>
<dbReference type="RefSeq" id="XP_008758450.1">
    <property type="nucleotide sequence ID" value="XM_008760228.2"/>
</dbReference>
<dbReference type="RefSeq" id="XP_017444749.1">
    <property type="nucleotide sequence ID" value="XM_017589260.1"/>
</dbReference>
<dbReference type="SMR" id="P02782"/>
<dbReference type="FunCoup" id="P02782">
    <property type="interactions" value="12"/>
</dbReference>
<dbReference type="STRING" id="10116.ENSRNOP00000027492"/>
<dbReference type="PaxDb" id="10116-ENSRNOP00000027492"/>
<dbReference type="Ensembl" id="ENSRNOT00000027492.4">
    <property type="protein sequence ID" value="ENSRNOP00000027492.1"/>
    <property type="gene ID" value="ENSRNOG00000020294.4"/>
</dbReference>
<dbReference type="GeneID" id="309203"/>
<dbReference type="KEGG" id="rno:309203"/>
<dbReference type="UCSC" id="RGD:708459">
    <property type="organism name" value="rat"/>
</dbReference>
<dbReference type="AGR" id="RGD:708459"/>
<dbReference type="CTD" id="10647"/>
<dbReference type="RGD" id="708459">
    <property type="gene designation" value="Psbpc1"/>
</dbReference>
<dbReference type="eggNOG" id="ENOG502SXZG">
    <property type="taxonomic scope" value="Eukaryota"/>
</dbReference>
<dbReference type="GeneTree" id="ENSGT00530000063866"/>
<dbReference type="HOGENOM" id="CLU_166234_0_0_1"/>
<dbReference type="InParanoid" id="P02782"/>
<dbReference type="OMA" id="ITARNCV"/>
<dbReference type="OrthoDB" id="9535440at2759"/>
<dbReference type="PhylomeDB" id="P02782"/>
<dbReference type="TreeFam" id="TF338526"/>
<dbReference type="PRO" id="PR:P02782"/>
<dbReference type="Proteomes" id="UP000002494">
    <property type="component" value="Chromosome 1"/>
</dbReference>
<dbReference type="Bgee" id="ENSRNOG00000020294">
    <property type="expression patterns" value="Expressed in testis"/>
</dbReference>
<dbReference type="GO" id="GO:0005615">
    <property type="term" value="C:extracellular space"/>
    <property type="evidence" value="ECO:0000318"/>
    <property type="project" value="GO_Central"/>
</dbReference>
<dbReference type="GO" id="GO:0005496">
    <property type="term" value="F:steroid binding"/>
    <property type="evidence" value="ECO:0007669"/>
    <property type="project" value="UniProtKB-KW"/>
</dbReference>
<dbReference type="CDD" id="cd00633">
    <property type="entry name" value="Secretoglobin"/>
    <property type="match status" value="1"/>
</dbReference>
<dbReference type="InterPro" id="IPR016126">
    <property type="entry name" value="Secretoglobin"/>
</dbReference>
<dbReference type="InterPro" id="IPR035960">
    <property type="entry name" value="Secretoglobin_sf"/>
</dbReference>
<dbReference type="PANTHER" id="PTHR11332">
    <property type="entry name" value="SECRETOGLOBIN FAMILY 1D"/>
    <property type="match status" value="1"/>
</dbReference>
<dbReference type="PANTHER" id="PTHR11332:SF6">
    <property type="entry name" value="SECRETOGLOBIN FAMILY 1D MEMBER 4"/>
    <property type="match status" value="1"/>
</dbReference>
<dbReference type="Pfam" id="PF01099">
    <property type="entry name" value="Uteroglobin"/>
    <property type="match status" value="1"/>
</dbReference>
<dbReference type="SUPFAM" id="SSF48201">
    <property type="entry name" value="Uteroglobin-like"/>
    <property type="match status" value="1"/>
</dbReference>
<dbReference type="PROSITE" id="PS51311">
    <property type="entry name" value="SCGB"/>
    <property type="match status" value="1"/>
</dbReference>
<protein>
    <recommendedName>
        <fullName>Prostatic steroid-binding protein C1</fullName>
    </recommendedName>
    <alternativeName>
        <fullName>Prostatein peptide C1</fullName>
    </alternativeName>
</protein>
<comment type="function">
    <text>Part of prostatein which is the major secretory glycoprotein of ventral prostate gland.</text>
</comment>
<comment type="subunit">
    <text>Prostatein is composed of three different peptides called C1, C2 and C3. These form covalent C1:C3 (F) and C2:C3 (S) heterodimers whose noncovalent association forms tetrameric (C1:C3/C3:C2) prostatein molecules.</text>
</comment>
<comment type="subcellular location">
    <subcellularLocation>
        <location>Secreted</location>
    </subcellularLocation>
</comment>
<comment type="miscellaneous">
    <text>The heterodimer can bind non-polar steroids, cholesterol and a group of small proline-rich peptides.</text>
</comment>
<comment type="similarity">
    <text evidence="3">Belongs to the secretoglobin family. Lipophilin subfamily.</text>
</comment>
<comment type="caution">
    <text evidence="3">Was originally (Ref.4) thought to originate from mouse.</text>
</comment>
<feature type="signal peptide" evidence="1 2">
    <location>
        <begin position="1"/>
        <end position="23"/>
    </location>
</feature>
<feature type="chain" id="PRO_0000036375" description="Prostatic steroid-binding protein C1">
    <location>
        <begin position="24"/>
        <end position="111"/>
    </location>
</feature>
<feature type="sequence conflict" description="In Ref. 1; AAA41969." evidence="3" ref="1">
    <original>K</original>
    <variation>E</variation>
    <location>
        <position position="5"/>
    </location>
</feature>
<feature type="sequence conflict" description="In Ref. 6." evidence="3" ref="6">
    <original>A</original>
    <variation>S</variation>
    <location>
        <position position="15"/>
    </location>
</feature>
<feature type="sequence conflict" description="In Ref. 6." evidence="3" ref="6">
    <original>CC</original>
    <variation>GG</variation>
    <location>
        <begin position="17"/>
        <end position="18"/>
    </location>
</feature>
<feature type="sequence conflict" description="In Ref. 8; AA sequence." evidence="3" ref="8">
    <original>N</original>
    <variation>D</variation>
    <location>
        <position position="74"/>
    </location>
</feature>
<proteinExistence type="evidence at protein level"/>
<keyword id="KW-0903">Direct protein sequencing</keyword>
<keyword id="KW-0446">Lipid-binding</keyword>
<keyword id="KW-1185">Reference proteome</keyword>
<keyword id="KW-0964">Secreted</keyword>
<keyword id="KW-0732">Signal</keyword>
<keyword id="KW-0754">Steroid-binding</keyword>
<evidence type="ECO:0000269" key="1">
    <source>
    </source>
</evidence>
<evidence type="ECO:0000269" key="2">
    <source>
    </source>
</evidence>
<evidence type="ECO:0000305" key="3"/>
<gene>
    <name type="primary">Psbpc1</name>
    <name type="synonym">Scgb1d2</name>
</gene>
<accession>P02782</accession>
<accession>P60808</accession>
<accession>Q499X0</accession>
<accession>Q63469</accession>
<reference key="1">
    <citation type="journal article" date="1982" name="Nature">
        <title>Prostatic steroid binding protein: gene duplication and steroid binding.</title>
        <authorList>
            <person name="Parker M.G."/>
            <person name="Needham M."/>
            <person name="White R."/>
        </authorList>
    </citation>
    <scope>NUCLEOTIDE SEQUENCE [MRNA]</scope>
</reference>
<reference key="2">
    <citation type="submission" date="1983-07" db="EMBL/GenBank/DDBJ databases">
        <authorList>
            <person name="Parker M.G."/>
        </authorList>
    </citation>
    <scope>SEQUENCE REVISION</scope>
</reference>
<reference key="3">
    <citation type="journal article" date="1983" name="Eur. J. Biochem.">
        <title>The nucleotide sequence of cDNA complementary to the C1 component of rat prostatic binding protein.</title>
        <authorList>
            <person name="Delaey B."/>
            <person name="Dirckx L."/>
            <person name="Peeters B."/>
            <person name="Volckaert G."/>
            <person name="Mous J."/>
            <person name="Heyns W."/>
            <person name="Rombauts W."/>
        </authorList>
    </citation>
    <scope>NUCLEOTIDE SEQUENCE [MRNA]</scope>
</reference>
<reference key="4">
    <citation type="submission" date="2000-06" db="EMBL/GenBank/DDBJ databases">
        <title>Sequence of C1 chain of mouse prostate steroid binding protein.</title>
        <authorList>
            <person name="Kaushal V."/>
            <person name="Chatta G.S."/>
        </authorList>
    </citation>
    <scope>NUCLEOTIDE SEQUENCE [MRNA]</scope>
</reference>
<reference key="5">
    <citation type="journal article" date="2004" name="Genome Res.">
        <title>The status, quality, and expansion of the NIH full-length cDNA project: the Mammalian Gene Collection (MGC).</title>
        <authorList>
            <consortium name="The MGC Project Team"/>
        </authorList>
    </citation>
    <scope>NUCLEOTIDE SEQUENCE [LARGE SCALE MRNA] OF 2-111</scope>
    <source>
        <tissue>Prostate</tissue>
    </source>
</reference>
<reference key="6">
    <citation type="journal article" date="1982" name="Biochem. Soc. Trans.">
        <title>Identification of a complementary-DNA clone containing part of the sequence information for the C-1-polypeptide of rat prostatic binding protein.</title>
        <authorList>
            <person name="Delaey B."/>
            <person name="Rombauts W."/>
            <person name="Volckaert G."/>
            <person name="Peeters B."/>
            <person name="Mous J."/>
            <person name="Heyns W."/>
        </authorList>
    </citation>
    <scope>NUCLEOTIDE SEQUENCE [MRNA] OF 13-65</scope>
</reference>
<reference key="7">
    <citation type="journal article" date="1982" name="Eur. J. Biochem.">
        <title>Structural studies on rat prostatic binding protein. The primary structure of component C1 from subunit F.</title>
        <authorList>
            <person name="Peeters B."/>
            <person name="Heyns W."/>
            <person name="Mous J."/>
            <person name="Rombauts W."/>
        </authorList>
    </citation>
    <scope>PROTEIN SEQUENCE OF 24-111</scope>
</reference>
<reference key="8">
    <citation type="journal article" date="1982" name="J. Biol. Chem.">
        <title>Prostate alpha-protein. Complete amino acid sequence of the component that inhibits nuclear retention of the androgen-receptor complex.</title>
        <authorList>
            <person name="Liao S."/>
            <person name="Chen C."/>
            <person name="Huang I.-Y."/>
        </authorList>
    </citation>
    <scope>PROTEIN SEQUENCE OF 24-111</scope>
</reference>
<sequence length="111" mass="12763">MSTIKLSLCLLIMLAVCCYEANASQICELVAHETISFLMKSEEELKKELEMYNAPPAAVEAKLEVKRCVDQMSNGDRLVVAETLVYIFLECGVKQWVETYYPEIDFYYDMN</sequence>